<gene>
    <name evidence="1" type="primary">caiC</name>
    <name type="ordered locus">ECUMN_0039</name>
</gene>
<feature type="chain" id="PRO_0000383398" description="Crotonobetaine/carnitine--CoA ligase">
    <location>
        <begin position="1"/>
        <end position="517"/>
    </location>
</feature>
<keyword id="KW-0436">Ligase</keyword>
<reference key="1">
    <citation type="journal article" date="2009" name="PLoS Genet.">
        <title>Organised genome dynamics in the Escherichia coli species results in highly diverse adaptive paths.</title>
        <authorList>
            <person name="Touchon M."/>
            <person name="Hoede C."/>
            <person name="Tenaillon O."/>
            <person name="Barbe V."/>
            <person name="Baeriswyl S."/>
            <person name="Bidet P."/>
            <person name="Bingen E."/>
            <person name="Bonacorsi S."/>
            <person name="Bouchier C."/>
            <person name="Bouvet O."/>
            <person name="Calteau A."/>
            <person name="Chiapello H."/>
            <person name="Clermont O."/>
            <person name="Cruveiller S."/>
            <person name="Danchin A."/>
            <person name="Diard M."/>
            <person name="Dossat C."/>
            <person name="Karoui M.E."/>
            <person name="Frapy E."/>
            <person name="Garry L."/>
            <person name="Ghigo J.M."/>
            <person name="Gilles A.M."/>
            <person name="Johnson J."/>
            <person name="Le Bouguenec C."/>
            <person name="Lescat M."/>
            <person name="Mangenot S."/>
            <person name="Martinez-Jehanne V."/>
            <person name="Matic I."/>
            <person name="Nassif X."/>
            <person name="Oztas S."/>
            <person name="Petit M.A."/>
            <person name="Pichon C."/>
            <person name="Rouy Z."/>
            <person name="Ruf C.S."/>
            <person name="Schneider D."/>
            <person name="Tourret J."/>
            <person name="Vacherie B."/>
            <person name="Vallenet D."/>
            <person name="Medigue C."/>
            <person name="Rocha E.P.C."/>
            <person name="Denamur E."/>
        </authorList>
    </citation>
    <scope>NUCLEOTIDE SEQUENCE [LARGE SCALE GENOMIC DNA]</scope>
    <source>
        <strain>UMN026 / ExPEC</strain>
    </source>
</reference>
<dbReference type="EC" id="6.2.1.48" evidence="1"/>
<dbReference type="EMBL" id="CU928163">
    <property type="protein sequence ID" value="CAR11262.1"/>
    <property type="status" value="ALT_INIT"/>
    <property type="molecule type" value="Genomic_DNA"/>
</dbReference>
<dbReference type="RefSeq" id="WP_001309938.1">
    <property type="nucleotide sequence ID" value="NC_011751.1"/>
</dbReference>
<dbReference type="SMR" id="B7N7R2"/>
<dbReference type="STRING" id="585056.ECUMN_0039"/>
<dbReference type="KEGG" id="eum:ECUMN_0039"/>
<dbReference type="PATRIC" id="fig|585056.7.peg.224"/>
<dbReference type="HOGENOM" id="CLU_000022_59_0_6"/>
<dbReference type="UniPathway" id="UPA00117"/>
<dbReference type="Proteomes" id="UP000007097">
    <property type="component" value="Chromosome"/>
</dbReference>
<dbReference type="GO" id="GO:0051108">
    <property type="term" value="F:carnitine-CoA ligase activity"/>
    <property type="evidence" value="ECO:0007669"/>
    <property type="project" value="InterPro"/>
</dbReference>
<dbReference type="GO" id="GO:0051109">
    <property type="term" value="F:crotonobetaine-CoA ligase activity"/>
    <property type="evidence" value="ECO:0007669"/>
    <property type="project" value="InterPro"/>
</dbReference>
<dbReference type="GO" id="GO:0031956">
    <property type="term" value="F:medium-chain fatty acid-CoA ligase activity"/>
    <property type="evidence" value="ECO:0007669"/>
    <property type="project" value="TreeGrafter"/>
</dbReference>
<dbReference type="GO" id="GO:0009437">
    <property type="term" value="P:carnitine metabolic process"/>
    <property type="evidence" value="ECO:0007669"/>
    <property type="project" value="UniProtKB-UniRule"/>
</dbReference>
<dbReference type="GO" id="GO:0006631">
    <property type="term" value="P:fatty acid metabolic process"/>
    <property type="evidence" value="ECO:0007669"/>
    <property type="project" value="TreeGrafter"/>
</dbReference>
<dbReference type="CDD" id="cd05934">
    <property type="entry name" value="FACL_DitJ_like"/>
    <property type="match status" value="1"/>
</dbReference>
<dbReference type="FunFam" id="3.30.300.30:FF:000011">
    <property type="entry name" value="Crotonobetaine/carnitine--CoA ligase"/>
    <property type="match status" value="1"/>
</dbReference>
<dbReference type="FunFam" id="3.40.50.12780:FF:000017">
    <property type="entry name" value="Crotonobetaine/carnitine--CoA ligase"/>
    <property type="match status" value="1"/>
</dbReference>
<dbReference type="Gene3D" id="3.30.300.30">
    <property type="match status" value="1"/>
</dbReference>
<dbReference type="Gene3D" id="3.40.50.12780">
    <property type="entry name" value="N-terminal domain of ligase-like"/>
    <property type="match status" value="1"/>
</dbReference>
<dbReference type="HAMAP" id="MF_01524">
    <property type="entry name" value="CaiC"/>
    <property type="match status" value="1"/>
</dbReference>
<dbReference type="InterPro" id="IPR025110">
    <property type="entry name" value="AMP-bd_C"/>
</dbReference>
<dbReference type="InterPro" id="IPR045851">
    <property type="entry name" value="AMP-bd_C_sf"/>
</dbReference>
<dbReference type="InterPro" id="IPR020845">
    <property type="entry name" value="AMP-binding_CS"/>
</dbReference>
<dbReference type="InterPro" id="IPR000873">
    <property type="entry name" value="AMP-dep_synth/lig_dom"/>
</dbReference>
<dbReference type="InterPro" id="IPR042099">
    <property type="entry name" value="ANL_N_sf"/>
</dbReference>
<dbReference type="InterPro" id="IPR023456">
    <property type="entry name" value="CaiC"/>
</dbReference>
<dbReference type="NCBIfam" id="NF005947">
    <property type="entry name" value="PRK08008.1"/>
    <property type="match status" value="1"/>
</dbReference>
<dbReference type="PANTHER" id="PTHR43201">
    <property type="entry name" value="ACYL-COA SYNTHETASE"/>
    <property type="match status" value="1"/>
</dbReference>
<dbReference type="PANTHER" id="PTHR43201:SF5">
    <property type="entry name" value="MEDIUM-CHAIN ACYL-COA LIGASE ACSF2, MITOCHONDRIAL"/>
    <property type="match status" value="1"/>
</dbReference>
<dbReference type="Pfam" id="PF00501">
    <property type="entry name" value="AMP-binding"/>
    <property type="match status" value="1"/>
</dbReference>
<dbReference type="Pfam" id="PF13193">
    <property type="entry name" value="AMP-binding_C"/>
    <property type="match status" value="1"/>
</dbReference>
<dbReference type="SUPFAM" id="SSF56801">
    <property type="entry name" value="Acetyl-CoA synthetase-like"/>
    <property type="match status" value="1"/>
</dbReference>
<dbReference type="PROSITE" id="PS00455">
    <property type="entry name" value="AMP_BINDING"/>
    <property type="match status" value="1"/>
</dbReference>
<accession>B7N7R2</accession>
<organism>
    <name type="scientific">Escherichia coli O17:K52:H18 (strain UMN026 / ExPEC)</name>
    <dbReference type="NCBI Taxonomy" id="585056"/>
    <lineage>
        <taxon>Bacteria</taxon>
        <taxon>Pseudomonadati</taxon>
        <taxon>Pseudomonadota</taxon>
        <taxon>Gammaproteobacteria</taxon>
        <taxon>Enterobacterales</taxon>
        <taxon>Enterobacteriaceae</taxon>
        <taxon>Escherichia</taxon>
    </lineage>
</organism>
<comment type="function">
    <text evidence="1">Catalyzes the transfer of CoA to carnitine, generating the initial carnitinyl-CoA needed for the CaiB reaction cycle. Also has activity toward crotonobetaine and gamma-butyrobetaine.</text>
</comment>
<comment type="catalytic activity">
    <reaction evidence="1">
        <text>4-(trimethylamino)butanoate + ATP + CoA = 4-(trimethylamino)butanoyl-CoA + AMP + diphosphate</text>
        <dbReference type="Rhea" id="RHEA:55960"/>
        <dbReference type="ChEBI" id="CHEBI:16244"/>
        <dbReference type="ChEBI" id="CHEBI:30616"/>
        <dbReference type="ChEBI" id="CHEBI:33019"/>
        <dbReference type="ChEBI" id="CHEBI:57287"/>
        <dbReference type="ChEBI" id="CHEBI:61513"/>
        <dbReference type="ChEBI" id="CHEBI:456215"/>
        <dbReference type="EC" id="6.2.1.48"/>
    </reaction>
</comment>
<comment type="catalytic activity">
    <reaction evidence="1">
        <text>crotonobetaine + ATP + CoA = crotonobetainyl-CoA + AMP + diphosphate</text>
        <dbReference type="Rhea" id="RHEA:30079"/>
        <dbReference type="ChEBI" id="CHEBI:17237"/>
        <dbReference type="ChEBI" id="CHEBI:30616"/>
        <dbReference type="ChEBI" id="CHEBI:33019"/>
        <dbReference type="ChEBI" id="CHEBI:57287"/>
        <dbReference type="ChEBI" id="CHEBI:60933"/>
        <dbReference type="ChEBI" id="CHEBI:456215"/>
        <dbReference type="EC" id="6.2.1.48"/>
    </reaction>
</comment>
<comment type="catalytic activity">
    <reaction evidence="1">
        <text>(R)-carnitine + ATP + CoA = (R)-carnitinyl-CoA + AMP + diphosphate</text>
        <dbReference type="Rhea" id="RHEA:28514"/>
        <dbReference type="ChEBI" id="CHEBI:16347"/>
        <dbReference type="ChEBI" id="CHEBI:30616"/>
        <dbReference type="ChEBI" id="CHEBI:33019"/>
        <dbReference type="ChEBI" id="CHEBI:57287"/>
        <dbReference type="ChEBI" id="CHEBI:60932"/>
        <dbReference type="ChEBI" id="CHEBI:456215"/>
        <dbReference type="EC" id="6.2.1.48"/>
    </reaction>
</comment>
<comment type="pathway">
    <text evidence="1">Amine and polyamine metabolism; carnitine metabolism.</text>
</comment>
<comment type="similarity">
    <text evidence="1">Belongs to the ATP-dependent AMP-binding enzyme family.</text>
</comment>
<comment type="sequence caution" evidence="2">
    <conflict type="erroneous initiation">
        <sequence resource="EMBL-CDS" id="CAR11262"/>
    </conflict>
</comment>
<evidence type="ECO:0000255" key="1">
    <source>
        <dbReference type="HAMAP-Rule" id="MF_01524"/>
    </source>
</evidence>
<evidence type="ECO:0000305" key="2"/>
<proteinExistence type="inferred from homology"/>
<protein>
    <recommendedName>
        <fullName evidence="1">Crotonobetaine/carnitine--CoA ligase</fullName>
        <ecNumber evidence="1">6.2.1.48</ecNumber>
    </recommendedName>
</protein>
<sequence length="517" mass="58591">MDIIGGQHLRQMWDDLADVYGHKTALICESSSGVVNRYSYLELNQEINRTANLFYTLGIRKGDKVALHLDNCPEFIFCWFGLAKIGAIMVPINARLLREESAWILQNSQACLLVTSAQFYPMYQQIQQEDASQLRHICLIDMALPADDGVSSFTQLKNQQPATLCYAPPLSTDDTAEILFTSGTTSRPKGVVITHYNLRFAGYYSAWQCALRDDDVYLTVMPAFHIDCQCTAAMAAFSAGATFVLVEKYSARAFWGQVQKYRATITECIPMMIRTLMVQPPSANDRQHCLREVMFYLNLSEQEKDAFCERFSVRLLTSYGMTETIVGIIGDRPGDKRRWPSIGRAGFCYEAEIRDDHNRPLPAGELGEICIKGVPGKTIFKEYFLNPKATAKVLEADGWLHTGDTGYRDEEGFFYFVDRRCNMIKRGGENVSCVELENIIAAHPKIQDIVVVGIKDSIRDEAIKAFVVLNEGETLSEEEFFRFCEQNMAKFKVPSYLEIRKDLPRNCSGKIIRKNLK</sequence>
<name>CAIC_ECOLU</name>